<protein>
    <recommendedName>
        <fullName>Vesicle transport protein GOT1A</fullName>
    </recommendedName>
    <alternativeName>
        <fullName>Golgi transport 1 homolog A</fullName>
    </alternativeName>
</protein>
<sequence length="132" mass="14817">MISITEWQKIGVGTTGFGIFFILFGMLLYFDSVLLAFGNLLFLTGLSLIIGLRRTFSFFFQRHKFKGTSFFLGGVVIVLLRWPLLGMCLETYGFFSLFRGFFPVAFGFLGSASNIPFLSALFQRLQGTSSMV</sequence>
<organism>
    <name type="scientific">Bos taurus</name>
    <name type="common">Bovine</name>
    <dbReference type="NCBI Taxonomy" id="9913"/>
    <lineage>
        <taxon>Eukaryota</taxon>
        <taxon>Metazoa</taxon>
        <taxon>Chordata</taxon>
        <taxon>Craniata</taxon>
        <taxon>Vertebrata</taxon>
        <taxon>Euteleostomi</taxon>
        <taxon>Mammalia</taxon>
        <taxon>Eutheria</taxon>
        <taxon>Laurasiatheria</taxon>
        <taxon>Artiodactyla</taxon>
        <taxon>Ruminantia</taxon>
        <taxon>Pecora</taxon>
        <taxon>Bovidae</taxon>
        <taxon>Bovinae</taxon>
        <taxon>Bos</taxon>
    </lineage>
</organism>
<feature type="chain" id="PRO_0000237606" description="Vesicle transport protein GOT1A">
    <location>
        <begin position="1"/>
        <end position="132"/>
    </location>
</feature>
<feature type="topological domain" description="Cytoplasmic" evidence="4">
    <location>
        <begin position="1"/>
        <end position="16"/>
    </location>
</feature>
<feature type="transmembrane region" description="Helical; Name=1" evidence="4">
    <location>
        <begin position="17"/>
        <end position="37"/>
    </location>
</feature>
<feature type="topological domain" description="Lumenal" evidence="4">
    <location>
        <begin position="38"/>
        <end position="39"/>
    </location>
</feature>
<feature type="transmembrane region" description="Helical; Name=2" evidence="4">
    <location>
        <begin position="40"/>
        <end position="60"/>
    </location>
</feature>
<feature type="topological domain" description="Cytoplasmic" evidence="4">
    <location>
        <begin position="61"/>
        <end position="68"/>
    </location>
</feature>
<feature type="transmembrane region" description="Helical; Name=3" evidence="4">
    <location>
        <begin position="69"/>
        <end position="89"/>
    </location>
</feature>
<feature type="topological domain" description="Lumenal" evidence="4">
    <location>
        <begin position="90"/>
        <end position="100"/>
    </location>
</feature>
<feature type="transmembrane region" description="Helical; Name=4" evidence="4">
    <location>
        <begin position="101"/>
        <end position="121"/>
    </location>
</feature>
<feature type="topological domain" description="Cytoplasmic" evidence="4">
    <location>
        <begin position="122"/>
        <end position="132"/>
    </location>
</feature>
<dbReference type="EMBL" id="BC111610">
    <property type="protein sequence ID" value="AAI11611.1"/>
    <property type="molecule type" value="mRNA"/>
</dbReference>
<dbReference type="RefSeq" id="NP_001068829.1">
    <property type="nucleotide sequence ID" value="NM_001075361.2"/>
</dbReference>
<dbReference type="SMR" id="Q2NKV8"/>
<dbReference type="FunCoup" id="Q2NKV8">
    <property type="interactions" value="449"/>
</dbReference>
<dbReference type="STRING" id="9913.ENSBTAP00000070375"/>
<dbReference type="PaxDb" id="9913-ENSBTAP00000013429"/>
<dbReference type="GeneID" id="508464"/>
<dbReference type="KEGG" id="bta:508464"/>
<dbReference type="CTD" id="127845"/>
<dbReference type="VEuPathDB" id="HostDB:ENSBTAG00000010177"/>
<dbReference type="eggNOG" id="KOG1743">
    <property type="taxonomic scope" value="Eukaryota"/>
</dbReference>
<dbReference type="HOGENOM" id="CLU_124519_2_0_1"/>
<dbReference type="InParanoid" id="Q2NKV8"/>
<dbReference type="OMA" id="FFFQRPK"/>
<dbReference type="OrthoDB" id="204784at2759"/>
<dbReference type="TreeFam" id="TF300267"/>
<dbReference type="Proteomes" id="UP000009136">
    <property type="component" value="Chromosome 16"/>
</dbReference>
<dbReference type="Bgee" id="ENSBTAG00000010177">
    <property type="expression patterns" value="Expressed in ascending colon and 74 other cell types or tissues"/>
</dbReference>
<dbReference type="GO" id="GO:0005829">
    <property type="term" value="C:cytosol"/>
    <property type="evidence" value="ECO:0007669"/>
    <property type="project" value="GOC"/>
</dbReference>
<dbReference type="GO" id="GO:0005783">
    <property type="term" value="C:endoplasmic reticulum"/>
    <property type="evidence" value="ECO:0000318"/>
    <property type="project" value="GO_Central"/>
</dbReference>
<dbReference type="GO" id="GO:0000139">
    <property type="term" value="C:Golgi membrane"/>
    <property type="evidence" value="ECO:0007669"/>
    <property type="project" value="UniProtKB-SubCell"/>
</dbReference>
<dbReference type="GO" id="GO:0016020">
    <property type="term" value="C:membrane"/>
    <property type="evidence" value="ECO:0000318"/>
    <property type="project" value="GO_Central"/>
</dbReference>
<dbReference type="GO" id="GO:0006888">
    <property type="term" value="P:endoplasmic reticulum to Golgi vesicle-mediated transport"/>
    <property type="evidence" value="ECO:0007669"/>
    <property type="project" value="InterPro"/>
</dbReference>
<dbReference type="GO" id="GO:0015031">
    <property type="term" value="P:protein transport"/>
    <property type="evidence" value="ECO:0007669"/>
    <property type="project" value="UniProtKB-KW"/>
</dbReference>
<dbReference type="GO" id="GO:0042147">
    <property type="term" value="P:retrograde transport, endosome to Golgi"/>
    <property type="evidence" value="ECO:0007669"/>
    <property type="project" value="InterPro"/>
</dbReference>
<dbReference type="InterPro" id="IPR045176">
    <property type="entry name" value="Got1"/>
</dbReference>
<dbReference type="InterPro" id="IPR007305">
    <property type="entry name" value="Vesicle_transpt_Got1/SFT2"/>
</dbReference>
<dbReference type="PANTHER" id="PTHR21493">
    <property type="entry name" value="CGI-141-RELATED/LIPASE CONTAINING PROTEIN"/>
    <property type="match status" value="1"/>
</dbReference>
<dbReference type="PANTHER" id="PTHR21493:SF245">
    <property type="entry name" value="VESICLE TRANSPORT PROTEIN GOT1A"/>
    <property type="match status" value="1"/>
</dbReference>
<dbReference type="Pfam" id="PF04178">
    <property type="entry name" value="Got1"/>
    <property type="match status" value="1"/>
</dbReference>
<proteinExistence type="evidence at transcript level"/>
<comment type="function">
    <text evidence="3">May be involved in fusion of ER-derived transport vesicles with the Golgi complex.</text>
</comment>
<comment type="subcellular location">
    <subcellularLocation>
        <location evidence="1">Golgi apparatus membrane</location>
        <topology evidence="1">Multi-pass membrane protein</topology>
    </subcellularLocation>
</comment>
<comment type="similarity">
    <text evidence="4">Belongs to the GOT1 family.</text>
</comment>
<gene>
    <name evidence="2" type="primary">GOLT1A</name>
</gene>
<evidence type="ECO:0000250" key="1"/>
<evidence type="ECO:0000250" key="2">
    <source>
        <dbReference type="UniProtKB" id="Q6ZVE7"/>
    </source>
</evidence>
<evidence type="ECO:0000250" key="3">
    <source>
        <dbReference type="UniProtKB" id="Q9Y3E0"/>
    </source>
</evidence>
<evidence type="ECO:0000255" key="4"/>
<evidence type="ECO:0000312" key="5">
    <source>
        <dbReference type="EMBL" id="AAI11611.1"/>
    </source>
</evidence>
<accession>Q2NKV8</accession>
<name>GOT1A_BOVIN</name>
<keyword id="KW-0333">Golgi apparatus</keyword>
<keyword id="KW-0472">Membrane</keyword>
<keyword id="KW-0653">Protein transport</keyword>
<keyword id="KW-1185">Reference proteome</keyword>
<keyword id="KW-0812">Transmembrane</keyword>
<keyword id="KW-1133">Transmembrane helix</keyword>
<keyword id="KW-0813">Transport</keyword>
<reference evidence="5" key="1">
    <citation type="submission" date="2006-01" db="EMBL/GenBank/DDBJ databases">
        <authorList>
            <consortium name="NIH - Mammalian Gene Collection (MGC) project"/>
        </authorList>
    </citation>
    <scope>NUCLEOTIDE SEQUENCE [LARGE SCALE MRNA]</scope>
    <source>
        <strain evidence="5">Hereford</strain>
        <tissue evidence="5">Testis</tissue>
    </source>
</reference>